<sequence length="317" mass="36909">MDYRVLLYYKYVTIDDPETFAAEHLEFCKENNLKGRILVSTEGINGTLSGTKEDTDQYIAHMRADERFKDITFKIDEAEGHAFKKMHVRPRHEIVALDLENDIDPRETTGKYLSPSEFREALEDDDTIVIDARNDYEFDLGHFRGAVRPNITRFRDLPDWIKENKEVFMDKKIVTYCTGGIRCEKFSGFLLKEGFEDVAQLEGGIATYGKDPETKGELWDGKMYVFDERISVDVNQVEKTVIGKEWFDGTPCERYINCSNPECNKQILVSEENEHRYLGACCKECAEHERNRYVAKHNISDEEKEKCLENFKETVQQ</sequence>
<comment type="function">
    <text evidence="1">Catalyzes oxygen-dependent 5-hydroxyuridine (ho5U) modification at position 34 in tRNAs.</text>
</comment>
<comment type="catalytic activity">
    <reaction evidence="1">
        <text>uridine(34) in tRNA + AH2 + O2 = 5-hydroxyuridine(34) in tRNA + A + H2O</text>
        <dbReference type="Rhea" id="RHEA:64224"/>
        <dbReference type="Rhea" id="RHEA-COMP:11727"/>
        <dbReference type="Rhea" id="RHEA-COMP:13381"/>
        <dbReference type="ChEBI" id="CHEBI:13193"/>
        <dbReference type="ChEBI" id="CHEBI:15377"/>
        <dbReference type="ChEBI" id="CHEBI:15379"/>
        <dbReference type="ChEBI" id="CHEBI:17499"/>
        <dbReference type="ChEBI" id="CHEBI:65315"/>
        <dbReference type="ChEBI" id="CHEBI:136877"/>
    </reaction>
</comment>
<comment type="similarity">
    <text evidence="1">Belongs to the TrhO family.</text>
</comment>
<reference key="1">
    <citation type="journal article" date="2009" name="Appl. Environ. Microbiol.">
        <title>Genome analysis of the meat starter culture bacterium Staphylococcus carnosus TM300.</title>
        <authorList>
            <person name="Rosenstein R."/>
            <person name="Nerz C."/>
            <person name="Biswas L."/>
            <person name="Resch A."/>
            <person name="Raddatz G."/>
            <person name="Schuster S.C."/>
            <person name="Goetz F."/>
        </authorList>
    </citation>
    <scope>NUCLEOTIDE SEQUENCE [LARGE SCALE GENOMIC DNA]</scope>
    <source>
        <strain>TM300</strain>
    </source>
</reference>
<accession>B9DJ55</accession>
<dbReference type="EC" id="1.14.-.-" evidence="1"/>
<dbReference type="EMBL" id="AM295250">
    <property type="protein sequence ID" value="CAL29206.1"/>
    <property type="molecule type" value="Genomic_DNA"/>
</dbReference>
<dbReference type="RefSeq" id="WP_015901541.1">
    <property type="nucleotide sequence ID" value="NC_012121.1"/>
</dbReference>
<dbReference type="SMR" id="B9DJ55"/>
<dbReference type="GeneID" id="93794750"/>
<dbReference type="KEGG" id="sca:SCA_2303"/>
<dbReference type="eggNOG" id="COG1054">
    <property type="taxonomic scope" value="Bacteria"/>
</dbReference>
<dbReference type="HOGENOM" id="CLU_038878_1_0_9"/>
<dbReference type="OrthoDB" id="9778326at2"/>
<dbReference type="BioCyc" id="SCAR396513:SCA_RS11595-MONOMER"/>
<dbReference type="Proteomes" id="UP000000444">
    <property type="component" value="Chromosome"/>
</dbReference>
<dbReference type="GO" id="GO:0016705">
    <property type="term" value="F:oxidoreductase activity, acting on paired donors, with incorporation or reduction of molecular oxygen"/>
    <property type="evidence" value="ECO:0007669"/>
    <property type="project" value="UniProtKB-UniRule"/>
</dbReference>
<dbReference type="GO" id="GO:0006400">
    <property type="term" value="P:tRNA modification"/>
    <property type="evidence" value="ECO:0007669"/>
    <property type="project" value="UniProtKB-UniRule"/>
</dbReference>
<dbReference type="CDD" id="cd01518">
    <property type="entry name" value="RHOD_YceA"/>
    <property type="match status" value="1"/>
</dbReference>
<dbReference type="Gene3D" id="3.30.70.100">
    <property type="match status" value="1"/>
</dbReference>
<dbReference type="Gene3D" id="3.40.250.10">
    <property type="entry name" value="Rhodanese-like domain"/>
    <property type="match status" value="1"/>
</dbReference>
<dbReference type="HAMAP" id="MF_00469">
    <property type="entry name" value="TrhO"/>
    <property type="match status" value="1"/>
</dbReference>
<dbReference type="InterPro" id="IPR001763">
    <property type="entry name" value="Rhodanese-like_dom"/>
</dbReference>
<dbReference type="InterPro" id="IPR036873">
    <property type="entry name" value="Rhodanese-like_dom_sf"/>
</dbReference>
<dbReference type="InterPro" id="IPR022111">
    <property type="entry name" value="Rhodanese_C"/>
</dbReference>
<dbReference type="InterPro" id="IPR020936">
    <property type="entry name" value="TrhO"/>
</dbReference>
<dbReference type="InterPro" id="IPR040503">
    <property type="entry name" value="TRHO_N"/>
</dbReference>
<dbReference type="NCBIfam" id="NF001135">
    <property type="entry name" value="PRK00142.1-3"/>
    <property type="match status" value="1"/>
</dbReference>
<dbReference type="PANTHER" id="PTHR43268:SF3">
    <property type="entry name" value="RHODANESE-LIKE DOMAIN-CONTAINING PROTEIN 7-RELATED"/>
    <property type="match status" value="1"/>
</dbReference>
<dbReference type="PANTHER" id="PTHR43268">
    <property type="entry name" value="THIOSULFATE SULFURTRANSFERASE/RHODANESE-LIKE DOMAIN-CONTAINING PROTEIN 2"/>
    <property type="match status" value="1"/>
</dbReference>
<dbReference type="Pfam" id="PF00581">
    <property type="entry name" value="Rhodanese"/>
    <property type="match status" value="1"/>
</dbReference>
<dbReference type="Pfam" id="PF12368">
    <property type="entry name" value="Rhodanese_C"/>
    <property type="match status" value="1"/>
</dbReference>
<dbReference type="Pfam" id="PF17773">
    <property type="entry name" value="UPF0176_N"/>
    <property type="match status" value="1"/>
</dbReference>
<dbReference type="SMART" id="SM00450">
    <property type="entry name" value="RHOD"/>
    <property type="match status" value="1"/>
</dbReference>
<dbReference type="SUPFAM" id="SSF52821">
    <property type="entry name" value="Rhodanese/Cell cycle control phosphatase"/>
    <property type="match status" value="1"/>
</dbReference>
<dbReference type="PROSITE" id="PS50206">
    <property type="entry name" value="RHODANESE_3"/>
    <property type="match status" value="1"/>
</dbReference>
<feature type="chain" id="PRO_1000135476" description="tRNA uridine(34) hydroxylase">
    <location>
        <begin position="1"/>
        <end position="317"/>
    </location>
</feature>
<feature type="domain" description="Rhodanese" evidence="1">
    <location>
        <begin position="123"/>
        <end position="217"/>
    </location>
</feature>
<feature type="active site" description="Cysteine persulfide intermediate" evidence="1">
    <location>
        <position position="177"/>
    </location>
</feature>
<organism>
    <name type="scientific">Staphylococcus carnosus (strain TM300)</name>
    <dbReference type="NCBI Taxonomy" id="396513"/>
    <lineage>
        <taxon>Bacteria</taxon>
        <taxon>Bacillati</taxon>
        <taxon>Bacillota</taxon>
        <taxon>Bacilli</taxon>
        <taxon>Bacillales</taxon>
        <taxon>Staphylococcaceae</taxon>
        <taxon>Staphylococcus</taxon>
    </lineage>
</organism>
<name>TRHO_STACT</name>
<gene>
    <name evidence="1" type="primary">trhO</name>
    <name type="ordered locus">Sca_2303</name>
</gene>
<protein>
    <recommendedName>
        <fullName evidence="1">tRNA uridine(34) hydroxylase</fullName>
        <ecNumber evidence="1">1.14.-.-</ecNumber>
    </recommendedName>
    <alternativeName>
        <fullName evidence="1">tRNA hydroxylation protein O</fullName>
    </alternativeName>
</protein>
<evidence type="ECO:0000255" key="1">
    <source>
        <dbReference type="HAMAP-Rule" id="MF_00469"/>
    </source>
</evidence>
<proteinExistence type="inferred from homology"/>
<keyword id="KW-0560">Oxidoreductase</keyword>
<keyword id="KW-1185">Reference proteome</keyword>
<keyword id="KW-0819">tRNA processing</keyword>